<comment type="function">
    <text evidence="2">Component of the cytochrome c oxidase, the last enzyme in the mitochondrial electron transport chain which drives oxidative phosphorylation. The respiratory chain contains 3 multisubunit complexes succinate dehydrogenase (complex II, CII), ubiquinol-cytochrome c oxidoreductase (cytochrome b-c1 complex, complex III, CIII) and cytochrome c oxidase (complex IV, CIV), that cooperate to transfer electrons derived from NADH and succinate to molecular oxygen, creating an electrochemical gradient over the inner membrane that drives transmembrane transport and the ATP synthase. Cytochrome c oxidase is the component of the respiratory chain that catalyzes the reduction of oxygen to water. Electrons originating from reduced cytochrome c in the intermembrane space (IMS) are transferred via the dinuclear copper A center (CU(A)) of subunit 2 and heme A of subunit 1 to the active site in subunit 1, a binuclear center (BNC) formed by heme A3 and copper B (CU(B)). The BNC reduces molecular oxygen to 2 water molecules using 4 electrons from cytochrome c in the IMS and 4 protons from the mitochondrial matrix.</text>
</comment>
<comment type="catalytic activity">
    <reaction evidence="2">
        <text>4 Fe(II)-[cytochrome c] + O2 + 8 H(+)(in) = 4 Fe(III)-[cytochrome c] + 2 H2O + 4 H(+)(out)</text>
        <dbReference type="Rhea" id="RHEA:11436"/>
        <dbReference type="Rhea" id="RHEA-COMP:10350"/>
        <dbReference type="Rhea" id="RHEA-COMP:14399"/>
        <dbReference type="ChEBI" id="CHEBI:15377"/>
        <dbReference type="ChEBI" id="CHEBI:15378"/>
        <dbReference type="ChEBI" id="CHEBI:15379"/>
        <dbReference type="ChEBI" id="CHEBI:29033"/>
        <dbReference type="ChEBI" id="CHEBI:29034"/>
        <dbReference type="EC" id="7.1.1.9"/>
    </reaction>
    <physiologicalReaction direction="left-to-right" evidence="2">
        <dbReference type="Rhea" id="RHEA:11437"/>
    </physiologicalReaction>
</comment>
<comment type="cofactor">
    <cofactor evidence="3">
        <name>Cu cation</name>
        <dbReference type="ChEBI" id="CHEBI:23378"/>
    </cofactor>
    <text evidence="3">Binds a dinuclear copper A center per subunit.</text>
</comment>
<comment type="subunit">
    <text evidence="1 3">Component of the cytochrome c oxidase (complex IV, CIV), a multisubunit enzyme composed of 14 subunits. The complex is composed of a catalytic core of 3 subunits MT-CO1, MT-CO2 and MT-CO3, encoded in the mitochondrial DNA, and 11 supernumerary subunits COX4I, COX5A, COX5B, COX6A, COX6B, COX6C, COX7A, COX7B, COX7C, COX8 and NDUFA4, which are encoded in the nuclear genome. The complex exists as a monomer or a dimer and forms supercomplexes (SCs) in the inner mitochondrial membrane with NADH-ubiquinone oxidoreductase (complex I, CI) and ubiquinol-cytochrome c oxidoreductase (cytochrome b-c1 complex, complex III, CIII), resulting in different assemblies (supercomplex SCI(1)III(2)IV(1) and megacomplex MCI(2)III(2)IV(2)) (By similarity). Found in a complex with TMEM177, COA6, COX18, COX20, SCO1 and SCO2. Interacts with TMEM177 in a COX20-dependent manner. Interacts with COX20. Interacts with COX16 (By similarity).</text>
</comment>
<comment type="subcellular location">
    <subcellularLocation>
        <location evidence="3">Mitochondrion inner membrane</location>
        <topology evidence="3">Multi-pass membrane protein</topology>
    </subcellularLocation>
</comment>
<comment type="similarity">
    <text evidence="4">Belongs to the cytochrome c oxidase subunit 2 family.</text>
</comment>
<proteinExistence type="inferred from homology"/>
<reference key="1">
    <citation type="journal article" date="1991" name="Proc. Natl. Acad. Sci. U.S.A.">
        <title>Resolution of the African hominoid trichotomy by use of a mitochondrial gene sequence.</title>
        <authorList>
            <person name="Ruvolo M."/>
            <person name="Disotell T.R."/>
            <person name="Allard M.W."/>
            <person name="Brown W.M."/>
            <person name="Honeycutt R.L."/>
        </authorList>
    </citation>
    <scope>NUCLEOTIDE SEQUENCE [GENOMIC DNA]</scope>
</reference>
<reference key="2">
    <citation type="journal article" date="1992" name="J. Mol. Evol.">
        <title>Man's place in Hominoidea revealed by mitochondrial DNA genealogy.</title>
        <authorList>
            <person name="Horai S."/>
            <person name="Satta Y."/>
            <person name="Hayasaka K."/>
            <person name="Kondo R."/>
            <person name="Inoue T."/>
            <person name="Ishida T."/>
            <person name="Hayashi S."/>
            <person name="Takahata N."/>
        </authorList>
    </citation>
    <scope>NUCLEOTIDE SEQUENCE [GENOMIC DNA]</scope>
</reference>
<evidence type="ECO:0000250" key="1">
    <source>
        <dbReference type="UniProtKB" id="P00403"/>
    </source>
</evidence>
<evidence type="ECO:0000250" key="2">
    <source>
        <dbReference type="UniProtKB" id="P00410"/>
    </source>
</evidence>
<evidence type="ECO:0000250" key="3">
    <source>
        <dbReference type="UniProtKB" id="P68530"/>
    </source>
</evidence>
<evidence type="ECO:0000305" key="4"/>
<geneLocation type="mitochondrion"/>
<keyword id="KW-0186">Copper</keyword>
<keyword id="KW-0249">Electron transport</keyword>
<keyword id="KW-0460">Magnesium</keyword>
<keyword id="KW-0472">Membrane</keyword>
<keyword id="KW-0479">Metal-binding</keyword>
<keyword id="KW-0496">Mitochondrion</keyword>
<keyword id="KW-0999">Mitochondrion inner membrane</keyword>
<keyword id="KW-0679">Respiratory chain</keyword>
<keyword id="KW-1278">Translocase</keyword>
<keyword id="KW-0812">Transmembrane</keyword>
<keyword id="KW-1133">Transmembrane helix</keyword>
<keyword id="KW-0813">Transport</keyword>
<dbReference type="EC" id="7.1.1.9"/>
<dbReference type="EMBL" id="M58007">
    <property type="protein sequence ID" value="AAA31769.1"/>
    <property type="molecule type" value="Genomic_DNA"/>
</dbReference>
<dbReference type="EMBL" id="D38484">
    <property type="protein sequence ID" value="BAA07497.1"/>
    <property type="molecule type" value="Genomic_DNA"/>
</dbReference>
<dbReference type="PIR" id="I37050">
    <property type="entry name" value="I37050"/>
</dbReference>
<dbReference type="RefSeq" id="YP_003587308.1">
    <property type="nucleotide sequence ID" value="NC_014047.1"/>
</dbReference>
<dbReference type="SMR" id="P25312"/>
<dbReference type="GeneID" id="9072792"/>
<dbReference type="KEGG" id="ssyn:9072792"/>
<dbReference type="CTD" id="4513"/>
<dbReference type="GO" id="GO:0005743">
    <property type="term" value="C:mitochondrial inner membrane"/>
    <property type="evidence" value="ECO:0007669"/>
    <property type="project" value="UniProtKB-SubCell"/>
</dbReference>
<dbReference type="GO" id="GO:0005739">
    <property type="term" value="C:mitochondrion"/>
    <property type="evidence" value="ECO:0000250"/>
    <property type="project" value="UniProtKB"/>
</dbReference>
<dbReference type="GO" id="GO:0045277">
    <property type="term" value="C:respiratory chain complex IV"/>
    <property type="evidence" value="ECO:0000250"/>
    <property type="project" value="UniProtKB"/>
</dbReference>
<dbReference type="GO" id="GO:0005507">
    <property type="term" value="F:copper ion binding"/>
    <property type="evidence" value="ECO:0007669"/>
    <property type="project" value="InterPro"/>
</dbReference>
<dbReference type="GO" id="GO:0004129">
    <property type="term" value="F:cytochrome-c oxidase activity"/>
    <property type="evidence" value="ECO:0007669"/>
    <property type="project" value="UniProtKB-EC"/>
</dbReference>
<dbReference type="GO" id="GO:0042773">
    <property type="term" value="P:ATP synthesis coupled electron transport"/>
    <property type="evidence" value="ECO:0007669"/>
    <property type="project" value="TreeGrafter"/>
</dbReference>
<dbReference type="CDD" id="cd13912">
    <property type="entry name" value="CcO_II_C"/>
    <property type="match status" value="1"/>
</dbReference>
<dbReference type="FunFam" id="1.10.287.90:FF:000001">
    <property type="entry name" value="Cytochrome c oxidase subunit 2"/>
    <property type="match status" value="1"/>
</dbReference>
<dbReference type="FunFam" id="2.60.40.420:FF:000001">
    <property type="entry name" value="Cytochrome c oxidase subunit 2"/>
    <property type="match status" value="1"/>
</dbReference>
<dbReference type="Gene3D" id="1.10.287.90">
    <property type="match status" value="1"/>
</dbReference>
<dbReference type="Gene3D" id="2.60.40.420">
    <property type="entry name" value="Cupredoxins - blue copper proteins"/>
    <property type="match status" value="1"/>
</dbReference>
<dbReference type="InterPro" id="IPR045187">
    <property type="entry name" value="CcO_II"/>
</dbReference>
<dbReference type="InterPro" id="IPR002429">
    <property type="entry name" value="CcO_II-like_C"/>
</dbReference>
<dbReference type="InterPro" id="IPR034210">
    <property type="entry name" value="CcO_II_C"/>
</dbReference>
<dbReference type="InterPro" id="IPR001505">
    <property type="entry name" value="Copper_CuA"/>
</dbReference>
<dbReference type="InterPro" id="IPR008972">
    <property type="entry name" value="Cupredoxin"/>
</dbReference>
<dbReference type="InterPro" id="IPR014222">
    <property type="entry name" value="Cyt_c_oxidase_su2"/>
</dbReference>
<dbReference type="InterPro" id="IPR011759">
    <property type="entry name" value="Cyt_c_oxidase_su2_TM_dom"/>
</dbReference>
<dbReference type="InterPro" id="IPR036257">
    <property type="entry name" value="Cyt_c_oxidase_su2_TM_sf"/>
</dbReference>
<dbReference type="NCBIfam" id="TIGR02866">
    <property type="entry name" value="CoxB"/>
    <property type="match status" value="1"/>
</dbReference>
<dbReference type="PANTHER" id="PTHR22888:SF9">
    <property type="entry name" value="CYTOCHROME C OXIDASE SUBUNIT 2"/>
    <property type="match status" value="1"/>
</dbReference>
<dbReference type="PANTHER" id="PTHR22888">
    <property type="entry name" value="CYTOCHROME C OXIDASE, SUBUNIT II"/>
    <property type="match status" value="1"/>
</dbReference>
<dbReference type="Pfam" id="PF00116">
    <property type="entry name" value="COX2"/>
    <property type="match status" value="1"/>
</dbReference>
<dbReference type="Pfam" id="PF02790">
    <property type="entry name" value="COX2_TM"/>
    <property type="match status" value="1"/>
</dbReference>
<dbReference type="PRINTS" id="PR01166">
    <property type="entry name" value="CYCOXIDASEII"/>
</dbReference>
<dbReference type="SUPFAM" id="SSF49503">
    <property type="entry name" value="Cupredoxins"/>
    <property type="match status" value="1"/>
</dbReference>
<dbReference type="SUPFAM" id="SSF81464">
    <property type="entry name" value="Cytochrome c oxidase subunit II-like, transmembrane region"/>
    <property type="match status" value="1"/>
</dbReference>
<dbReference type="PROSITE" id="PS00078">
    <property type="entry name" value="COX2"/>
    <property type="match status" value="1"/>
</dbReference>
<dbReference type="PROSITE" id="PS50857">
    <property type="entry name" value="COX2_CUA"/>
    <property type="match status" value="1"/>
</dbReference>
<dbReference type="PROSITE" id="PS50999">
    <property type="entry name" value="COX2_TM"/>
    <property type="match status" value="1"/>
</dbReference>
<organism>
    <name type="scientific">Symphalangus syndactylus</name>
    <name type="common">Siamang</name>
    <name type="synonym">Hylobates syndactylus</name>
    <dbReference type="NCBI Taxonomy" id="9590"/>
    <lineage>
        <taxon>Eukaryota</taxon>
        <taxon>Metazoa</taxon>
        <taxon>Chordata</taxon>
        <taxon>Craniata</taxon>
        <taxon>Vertebrata</taxon>
        <taxon>Euteleostomi</taxon>
        <taxon>Mammalia</taxon>
        <taxon>Eutheria</taxon>
        <taxon>Euarchontoglires</taxon>
        <taxon>Primates</taxon>
        <taxon>Haplorrhini</taxon>
        <taxon>Catarrhini</taxon>
        <taxon>Hylobatidae</taxon>
        <taxon>Symphalangus</taxon>
    </lineage>
</organism>
<sequence>MAHAAQMGLQDATSPIMEELISFHDHALMIIFLISFLVLYALFLTLTTKLTNTNITDAQEMETVWTILPAIILVLIALPSLRILYLTDEINDPSFTIKAIGHQWYWAYEYTDYGGLIFNSYMLPPLFLEPGDLRLLEVDNRVVLPIEAPVRMMITSQDVLHSWTVPSLGLKTDAIPGRLNQTTFTATRPGVYYGQCSEICGANHSFMPIVLELIPLKIFEMGPVFTL</sequence>
<protein>
    <recommendedName>
        <fullName>Cytochrome c oxidase subunit 2</fullName>
        <ecNumber>7.1.1.9</ecNumber>
    </recommendedName>
    <alternativeName>
        <fullName>Cytochrome c oxidase polypeptide II</fullName>
    </alternativeName>
</protein>
<name>COX2_SYMSY</name>
<gene>
    <name type="primary">MT-CO2</name>
    <name type="synonym">COII</name>
    <name type="synonym">COX2</name>
    <name type="synonym">COXII</name>
    <name type="synonym">MTCO2</name>
</gene>
<feature type="chain" id="PRO_0000183612" description="Cytochrome c oxidase subunit 2">
    <location>
        <begin position="1"/>
        <end position="227"/>
    </location>
</feature>
<feature type="topological domain" description="Mitochondrial intermembrane" evidence="3">
    <location>
        <begin position="1"/>
        <end position="14"/>
    </location>
</feature>
<feature type="transmembrane region" description="Helical; Name=I" evidence="3">
    <location>
        <begin position="15"/>
        <end position="45"/>
    </location>
</feature>
<feature type="topological domain" description="Mitochondrial matrix" evidence="3">
    <location>
        <begin position="46"/>
        <end position="59"/>
    </location>
</feature>
<feature type="transmembrane region" description="Helical; Name=II" evidence="3">
    <location>
        <begin position="60"/>
        <end position="87"/>
    </location>
</feature>
<feature type="topological domain" description="Mitochondrial intermembrane" evidence="3">
    <location>
        <begin position="88"/>
        <end position="227"/>
    </location>
</feature>
<feature type="binding site" evidence="3">
    <location>
        <position position="161"/>
    </location>
    <ligand>
        <name>Cu cation</name>
        <dbReference type="ChEBI" id="CHEBI:23378"/>
        <label>A1</label>
    </ligand>
</feature>
<feature type="binding site" evidence="3">
    <location>
        <position position="196"/>
    </location>
    <ligand>
        <name>Cu cation</name>
        <dbReference type="ChEBI" id="CHEBI:23378"/>
        <label>A1</label>
    </ligand>
</feature>
<feature type="binding site" evidence="3">
    <location>
        <position position="196"/>
    </location>
    <ligand>
        <name>Cu cation</name>
        <dbReference type="ChEBI" id="CHEBI:23378"/>
        <label>A2</label>
    </ligand>
</feature>
<feature type="binding site" evidence="3">
    <location>
        <position position="198"/>
    </location>
    <ligand>
        <name>Cu cation</name>
        <dbReference type="ChEBI" id="CHEBI:23378"/>
        <label>A2</label>
    </ligand>
</feature>
<feature type="binding site" evidence="3">
    <location>
        <position position="198"/>
    </location>
    <ligand>
        <name>Mg(2+)</name>
        <dbReference type="ChEBI" id="CHEBI:18420"/>
        <note>ligand shared with MT-CO1</note>
    </ligand>
</feature>
<feature type="binding site" evidence="3">
    <location>
        <position position="200"/>
    </location>
    <ligand>
        <name>Cu cation</name>
        <dbReference type="ChEBI" id="CHEBI:23378"/>
        <label>A1</label>
    </ligand>
</feature>
<feature type="binding site" evidence="3">
    <location>
        <position position="200"/>
    </location>
    <ligand>
        <name>Cu cation</name>
        <dbReference type="ChEBI" id="CHEBI:23378"/>
        <label>A2</label>
    </ligand>
</feature>
<feature type="binding site" evidence="3">
    <location>
        <position position="204"/>
    </location>
    <ligand>
        <name>Cu cation</name>
        <dbReference type="ChEBI" id="CHEBI:23378"/>
        <label>A2</label>
    </ligand>
</feature>
<feature type="binding site" evidence="3">
    <location>
        <position position="207"/>
    </location>
    <ligand>
        <name>Cu cation</name>
        <dbReference type="ChEBI" id="CHEBI:23378"/>
        <label>A1</label>
    </ligand>
</feature>
<feature type="sequence conflict" description="In Ref. 2; BAA07497." evidence="4" ref="2">
    <original>M</original>
    <variation>V</variation>
    <location>
        <position position="7"/>
    </location>
</feature>
<accession>P25312</accession>